<name>CYB_MESMC</name>
<organism>
    <name type="scientific">Mesophylla macconnelli</name>
    <name type="common">MacConnell's bat</name>
    <name type="synonym">Ectophylla macconnelli</name>
    <dbReference type="NCBI Taxonomy" id="148094"/>
    <lineage>
        <taxon>Eukaryota</taxon>
        <taxon>Metazoa</taxon>
        <taxon>Chordata</taxon>
        <taxon>Craniata</taxon>
        <taxon>Vertebrata</taxon>
        <taxon>Euteleostomi</taxon>
        <taxon>Mammalia</taxon>
        <taxon>Eutheria</taxon>
        <taxon>Laurasiatheria</taxon>
        <taxon>Chiroptera</taxon>
        <taxon>Yangochiroptera</taxon>
        <taxon>Phyllostomidae</taxon>
        <taxon>Stenodermatinae</taxon>
        <taxon>Mesophylla</taxon>
    </lineage>
</organism>
<geneLocation type="mitochondrion"/>
<dbReference type="EMBL" id="AY157036">
    <property type="protein sequence ID" value="AAO16532.1"/>
    <property type="molecule type" value="Genomic_DNA"/>
</dbReference>
<dbReference type="EMBL" id="AY157038">
    <property type="protein sequence ID" value="AAO16534.1"/>
    <property type="molecule type" value="Genomic_DNA"/>
</dbReference>
<dbReference type="EMBL" id="AY157039">
    <property type="protein sequence ID" value="AAO16535.1"/>
    <property type="molecule type" value="Genomic_DNA"/>
</dbReference>
<dbReference type="EMBL" id="AY157040">
    <property type="protein sequence ID" value="AAO16536.1"/>
    <property type="molecule type" value="Genomic_DNA"/>
</dbReference>
<dbReference type="EMBL" id="AY157041">
    <property type="protein sequence ID" value="AAO16537.1"/>
    <property type="molecule type" value="Genomic_DNA"/>
</dbReference>
<dbReference type="EMBL" id="AY157042">
    <property type="protein sequence ID" value="AAO16538.1"/>
    <property type="molecule type" value="Genomic_DNA"/>
</dbReference>
<dbReference type="SMR" id="Q6YDL2"/>
<dbReference type="GO" id="GO:0005743">
    <property type="term" value="C:mitochondrial inner membrane"/>
    <property type="evidence" value="ECO:0007669"/>
    <property type="project" value="UniProtKB-SubCell"/>
</dbReference>
<dbReference type="GO" id="GO:0045275">
    <property type="term" value="C:respiratory chain complex III"/>
    <property type="evidence" value="ECO:0007669"/>
    <property type="project" value="InterPro"/>
</dbReference>
<dbReference type="GO" id="GO:0046872">
    <property type="term" value="F:metal ion binding"/>
    <property type="evidence" value="ECO:0007669"/>
    <property type="project" value="UniProtKB-KW"/>
</dbReference>
<dbReference type="GO" id="GO:0008121">
    <property type="term" value="F:ubiquinol-cytochrome-c reductase activity"/>
    <property type="evidence" value="ECO:0007669"/>
    <property type="project" value="InterPro"/>
</dbReference>
<dbReference type="GO" id="GO:0006122">
    <property type="term" value="P:mitochondrial electron transport, ubiquinol to cytochrome c"/>
    <property type="evidence" value="ECO:0007669"/>
    <property type="project" value="TreeGrafter"/>
</dbReference>
<dbReference type="CDD" id="cd00290">
    <property type="entry name" value="cytochrome_b_C"/>
    <property type="match status" value="1"/>
</dbReference>
<dbReference type="CDD" id="cd00284">
    <property type="entry name" value="Cytochrome_b_N"/>
    <property type="match status" value="1"/>
</dbReference>
<dbReference type="FunFam" id="1.20.810.10:FF:000002">
    <property type="entry name" value="Cytochrome b"/>
    <property type="match status" value="1"/>
</dbReference>
<dbReference type="Gene3D" id="1.20.810.10">
    <property type="entry name" value="Cytochrome Bc1 Complex, Chain C"/>
    <property type="match status" value="1"/>
</dbReference>
<dbReference type="InterPro" id="IPR005798">
    <property type="entry name" value="Cyt_b/b6_C"/>
</dbReference>
<dbReference type="InterPro" id="IPR036150">
    <property type="entry name" value="Cyt_b/b6_C_sf"/>
</dbReference>
<dbReference type="InterPro" id="IPR005797">
    <property type="entry name" value="Cyt_b/b6_N"/>
</dbReference>
<dbReference type="InterPro" id="IPR027387">
    <property type="entry name" value="Cytb/b6-like_sf"/>
</dbReference>
<dbReference type="InterPro" id="IPR030689">
    <property type="entry name" value="Cytochrome_b"/>
</dbReference>
<dbReference type="InterPro" id="IPR048260">
    <property type="entry name" value="Cytochrome_b_C_euk/bac"/>
</dbReference>
<dbReference type="InterPro" id="IPR048259">
    <property type="entry name" value="Cytochrome_b_N_euk/bac"/>
</dbReference>
<dbReference type="InterPro" id="IPR016174">
    <property type="entry name" value="Di-haem_cyt_TM"/>
</dbReference>
<dbReference type="PANTHER" id="PTHR19271">
    <property type="entry name" value="CYTOCHROME B"/>
    <property type="match status" value="1"/>
</dbReference>
<dbReference type="PANTHER" id="PTHR19271:SF16">
    <property type="entry name" value="CYTOCHROME B"/>
    <property type="match status" value="1"/>
</dbReference>
<dbReference type="Pfam" id="PF00032">
    <property type="entry name" value="Cytochrom_B_C"/>
    <property type="match status" value="1"/>
</dbReference>
<dbReference type="Pfam" id="PF00033">
    <property type="entry name" value="Cytochrome_B"/>
    <property type="match status" value="1"/>
</dbReference>
<dbReference type="PIRSF" id="PIRSF038885">
    <property type="entry name" value="COB"/>
    <property type="match status" value="1"/>
</dbReference>
<dbReference type="SUPFAM" id="SSF81648">
    <property type="entry name" value="a domain/subunit of cytochrome bc1 complex (Ubiquinol-cytochrome c reductase)"/>
    <property type="match status" value="1"/>
</dbReference>
<dbReference type="SUPFAM" id="SSF81342">
    <property type="entry name" value="Transmembrane di-heme cytochromes"/>
    <property type="match status" value="1"/>
</dbReference>
<dbReference type="PROSITE" id="PS51003">
    <property type="entry name" value="CYTB_CTER"/>
    <property type="match status" value="1"/>
</dbReference>
<dbReference type="PROSITE" id="PS51002">
    <property type="entry name" value="CYTB_NTER"/>
    <property type="match status" value="1"/>
</dbReference>
<sequence>MTNIRKTHPLLKIINSSFVDLPAPSSLSSWWNFGSLLGVCLGVQILTGLFLAMHYTSDTATAFNSVTHICRDVNYGWLLRYLHANGASMFFICLYLHVGRGLYYGSYTYSETWNIGILLLFAVMATAFMGYVLPWGQMSFWGATVITNLLSAIPYIGTDLVQWIWGGFSVDKATLTRFFAFHFLLPFIVAALVMVHLLFLHETGSNNPTGIPSDPDMIPFHPYYTIKDILGFLIMLTALSTLVLFSPDLLGDPDNYIPANPLNTPPHIKPEWYFLFAYAILRSIPNKLGGVLALVMSILILAIVPVLHVSKQRSMMFRPLSQCLFWLLVSVLFTLTWIGGQPVEHPYIIIGQTASVLYFLIILVLMPAISLIENRLLKW</sequence>
<comment type="function">
    <text evidence="2">Component of the ubiquinol-cytochrome c reductase complex (complex III or cytochrome b-c1 complex) that is part of the mitochondrial respiratory chain. The b-c1 complex mediates electron transfer from ubiquinol to cytochrome c. Contributes to the generation of a proton gradient across the mitochondrial membrane that is then used for ATP synthesis.</text>
</comment>
<comment type="cofactor">
    <cofactor evidence="2">
        <name>heme b</name>
        <dbReference type="ChEBI" id="CHEBI:60344"/>
    </cofactor>
    <text evidence="2">Binds 2 heme b groups non-covalently.</text>
</comment>
<comment type="subunit">
    <text evidence="2">The cytochrome bc1 complex contains 11 subunits: 3 respiratory subunits (MT-CYB, CYC1 and UQCRFS1), 2 core proteins (UQCRC1 and UQCRC2) and 6 low-molecular weight proteins (UQCRH/QCR6, UQCRB/QCR7, UQCRQ/QCR8, UQCR10/QCR9, UQCR11/QCR10 and a cleavage product of UQCRFS1). This cytochrome bc1 complex then forms a dimer.</text>
</comment>
<comment type="subcellular location">
    <subcellularLocation>
        <location evidence="2">Mitochondrion inner membrane</location>
        <topology evidence="2">Multi-pass membrane protein</topology>
    </subcellularLocation>
</comment>
<comment type="miscellaneous">
    <text evidence="1">Heme 1 (or BL or b562) is low-potential and absorbs at about 562 nm, and heme 2 (or BH or b566) is high-potential and absorbs at about 566 nm.</text>
</comment>
<comment type="similarity">
    <text evidence="3 4">Belongs to the cytochrome b family.</text>
</comment>
<comment type="caution">
    <text evidence="2">The full-length protein contains only eight transmembrane helices, not nine as predicted by bioinformatics tools.</text>
</comment>
<gene>
    <name type="primary">MT-CYB</name>
    <name type="synonym">COB</name>
    <name type="synonym">CYTB</name>
    <name type="synonym">MTCYB</name>
</gene>
<feature type="chain" id="PRO_0000061172" description="Cytochrome b">
    <location>
        <begin position="1"/>
        <end position="379"/>
    </location>
</feature>
<feature type="transmembrane region" description="Helical" evidence="2">
    <location>
        <begin position="33"/>
        <end position="53"/>
    </location>
</feature>
<feature type="transmembrane region" description="Helical" evidence="2">
    <location>
        <begin position="77"/>
        <end position="98"/>
    </location>
</feature>
<feature type="transmembrane region" description="Helical" evidence="2">
    <location>
        <begin position="113"/>
        <end position="133"/>
    </location>
</feature>
<feature type="transmembrane region" description="Helical" evidence="2">
    <location>
        <begin position="178"/>
        <end position="198"/>
    </location>
</feature>
<feature type="transmembrane region" description="Helical" evidence="2">
    <location>
        <begin position="226"/>
        <end position="246"/>
    </location>
</feature>
<feature type="transmembrane region" description="Helical" evidence="2">
    <location>
        <begin position="288"/>
        <end position="308"/>
    </location>
</feature>
<feature type="transmembrane region" description="Helical" evidence="2">
    <location>
        <begin position="320"/>
        <end position="340"/>
    </location>
</feature>
<feature type="transmembrane region" description="Helical" evidence="2">
    <location>
        <begin position="347"/>
        <end position="367"/>
    </location>
</feature>
<feature type="binding site" description="axial binding residue" evidence="2">
    <location>
        <position position="83"/>
    </location>
    <ligand>
        <name>heme b</name>
        <dbReference type="ChEBI" id="CHEBI:60344"/>
        <label>b562</label>
    </ligand>
    <ligandPart>
        <name>Fe</name>
        <dbReference type="ChEBI" id="CHEBI:18248"/>
    </ligandPart>
</feature>
<feature type="binding site" description="axial binding residue" evidence="2">
    <location>
        <position position="97"/>
    </location>
    <ligand>
        <name>heme b</name>
        <dbReference type="ChEBI" id="CHEBI:60344"/>
        <label>b566</label>
    </ligand>
    <ligandPart>
        <name>Fe</name>
        <dbReference type="ChEBI" id="CHEBI:18248"/>
    </ligandPart>
</feature>
<feature type="binding site" description="axial binding residue" evidence="2">
    <location>
        <position position="182"/>
    </location>
    <ligand>
        <name>heme b</name>
        <dbReference type="ChEBI" id="CHEBI:60344"/>
        <label>b562</label>
    </ligand>
    <ligandPart>
        <name>Fe</name>
        <dbReference type="ChEBI" id="CHEBI:18248"/>
    </ligandPart>
</feature>
<feature type="binding site" description="axial binding residue" evidence="2">
    <location>
        <position position="196"/>
    </location>
    <ligand>
        <name>heme b</name>
        <dbReference type="ChEBI" id="CHEBI:60344"/>
        <label>b566</label>
    </ligand>
    <ligandPart>
        <name>Fe</name>
        <dbReference type="ChEBI" id="CHEBI:18248"/>
    </ligandPart>
</feature>
<feature type="binding site" evidence="2">
    <location>
        <position position="201"/>
    </location>
    <ligand>
        <name>a ubiquinone</name>
        <dbReference type="ChEBI" id="CHEBI:16389"/>
    </ligand>
</feature>
<proteinExistence type="inferred from homology"/>
<protein>
    <recommendedName>
        <fullName>Cytochrome b</fullName>
    </recommendedName>
    <alternativeName>
        <fullName>Complex III subunit 3</fullName>
    </alternativeName>
    <alternativeName>
        <fullName>Complex III subunit III</fullName>
    </alternativeName>
    <alternativeName>
        <fullName>Cytochrome b-c1 complex subunit 3</fullName>
    </alternativeName>
    <alternativeName>
        <fullName>Ubiquinol-cytochrome-c reductase complex cytochrome b subunit</fullName>
    </alternativeName>
</protein>
<evidence type="ECO:0000250" key="1"/>
<evidence type="ECO:0000250" key="2">
    <source>
        <dbReference type="UniProtKB" id="P00157"/>
    </source>
</evidence>
<evidence type="ECO:0000255" key="3">
    <source>
        <dbReference type="PROSITE-ProRule" id="PRU00967"/>
    </source>
</evidence>
<evidence type="ECO:0000255" key="4">
    <source>
        <dbReference type="PROSITE-ProRule" id="PRU00968"/>
    </source>
</evidence>
<keyword id="KW-0249">Electron transport</keyword>
<keyword id="KW-0349">Heme</keyword>
<keyword id="KW-0408">Iron</keyword>
<keyword id="KW-0472">Membrane</keyword>
<keyword id="KW-0479">Metal-binding</keyword>
<keyword id="KW-0496">Mitochondrion</keyword>
<keyword id="KW-0999">Mitochondrion inner membrane</keyword>
<keyword id="KW-0679">Respiratory chain</keyword>
<keyword id="KW-0812">Transmembrane</keyword>
<keyword id="KW-1133">Transmembrane helix</keyword>
<keyword id="KW-0813">Transport</keyword>
<keyword id="KW-0830">Ubiquinone</keyword>
<accession>Q6YDL2</accession>
<reference key="1">
    <citation type="journal article" date="2004" name="J. Mammal.">
        <title>Systematics of Vampyressa and related genera of phyllostomid bats as determined by cytochrome-b sequences.</title>
        <authorList>
            <person name="Porter C.A."/>
            <person name="Baker R.J."/>
        </authorList>
    </citation>
    <scope>NUCLEOTIDE SEQUENCE [GENOMIC DNA]</scope>
</reference>